<protein>
    <recommendedName>
        <fullName evidence="1">Protoheme IX farnesyltransferase</fullName>
        <ecNumber evidence="1">2.5.1.141</ecNumber>
    </recommendedName>
    <alternativeName>
        <fullName evidence="1">Heme B farnesyltransferase</fullName>
    </alternativeName>
    <alternativeName>
        <fullName evidence="1">Heme O synthase</fullName>
    </alternativeName>
</protein>
<evidence type="ECO:0000255" key="1">
    <source>
        <dbReference type="HAMAP-Rule" id="MF_00154"/>
    </source>
</evidence>
<name>COXX_BRUO2</name>
<sequence length="312" mass="34106">MEKNTASEDAFALSEATARDYLVLLKPRVMSLVVFTGLVGLVLAPGHMNPVLAVISILCIAVGAGASGALNMWYDADIDAVMKRTRKRPIPAGIIAPNQVLAFGLTLSAFSVMTLGLMVNWLAAALLAFTIFFYAVIYTMWLKRSTPQNIVIGGAAGAFPPMIGWAAATGEITWDSLVLFMIIFLWTPPHFWALSLFTTNDYEAARIPMMPNVKGELSTRRQALFYAVLMAPVGVLPWVMGFAGMFYGVVSTLLGLAFVYYAWRLWAADSQPQMLAAARKLFRFSLLYLAGIFAVLLFEALTFKLLAAFGVF</sequence>
<feature type="chain" id="PRO_0000327020" description="Protoheme IX farnesyltransferase">
    <location>
        <begin position="1"/>
        <end position="312"/>
    </location>
</feature>
<feature type="transmembrane region" description="Helical" evidence="1">
    <location>
        <begin position="29"/>
        <end position="49"/>
    </location>
</feature>
<feature type="transmembrane region" description="Helical" evidence="1">
    <location>
        <begin position="50"/>
        <end position="70"/>
    </location>
</feature>
<feature type="transmembrane region" description="Helical" evidence="1">
    <location>
        <begin position="90"/>
        <end position="110"/>
    </location>
</feature>
<feature type="transmembrane region" description="Helical" evidence="1">
    <location>
        <begin position="117"/>
        <end position="137"/>
    </location>
</feature>
<feature type="transmembrane region" description="Helical" evidence="1">
    <location>
        <begin position="150"/>
        <end position="170"/>
    </location>
</feature>
<feature type="transmembrane region" description="Helical" evidence="1">
    <location>
        <begin position="177"/>
        <end position="197"/>
    </location>
</feature>
<feature type="transmembrane region" description="Helical" evidence="1">
    <location>
        <begin position="223"/>
        <end position="243"/>
    </location>
</feature>
<feature type="transmembrane region" description="Helical" evidence="1">
    <location>
        <begin position="246"/>
        <end position="266"/>
    </location>
</feature>
<feature type="transmembrane region" description="Helical" evidence="1">
    <location>
        <begin position="292"/>
        <end position="312"/>
    </location>
</feature>
<organism>
    <name type="scientific">Brucella ovis (strain ATCC 25840 / 63/290 / NCTC 10512)</name>
    <dbReference type="NCBI Taxonomy" id="444178"/>
    <lineage>
        <taxon>Bacteria</taxon>
        <taxon>Pseudomonadati</taxon>
        <taxon>Pseudomonadota</taxon>
        <taxon>Alphaproteobacteria</taxon>
        <taxon>Hyphomicrobiales</taxon>
        <taxon>Brucellaceae</taxon>
        <taxon>Brucella/Ochrobactrum group</taxon>
        <taxon>Brucella</taxon>
    </lineage>
</organism>
<keyword id="KW-0997">Cell inner membrane</keyword>
<keyword id="KW-1003">Cell membrane</keyword>
<keyword id="KW-0350">Heme biosynthesis</keyword>
<keyword id="KW-0472">Membrane</keyword>
<keyword id="KW-0808">Transferase</keyword>
<keyword id="KW-0812">Transmembrane</keyword>
<keyword id="KW-1133">Transmembrane helix</keyword>
<comment type="function">
    <text evidence="1">Converts heme B (protoheme IX) to heme O by substitution of the vinyl group on carbon 2 of heme B porphyrin ring with a hydroxyethyl farnesyl side group.</text>
</comment>
<comment type="catalytic activity">
    <reaction evidence="1">
        <text>heme b + (2E,6E)-farnesyl diphosphate + H2O = Fe(II)-heme o + diphosphate</text>
        <dbReference type="Rhea" id="RHEA:28070"/>
        <dbReference type="ChEBI" id="CHEBI:15377"/>
        <dbReference type="ChEBI" id="CHEBI:33019"/>
        <dbReference type="ChEBI" id="CHEBI:60344"/>
        <dbReference type="ChEBI" id="CHEBI:60530"/>
        <dbReference type="ChEBI" id="CHEBI:175763"/>
        <dbReference type="EC" id="2.5.1.141"/>
    </reaction>
</comment>
<comment type="pathway">
    <text evidence="1">Porphyrin-containing compound metabolism; heme O biosynthesis; heme O from protoheme: step 1/1.</text>
</comment>
<comment type="subcellular location">
    <subcellularLocation>
        <location evidence="1">Cell inner membrane</location>
        <topology evidence="1">Multi-pass membrane protein</topology>
    </subcellularLocation>
</comment>
<comment type="miscellaneous">
    <text evidence="1">Carbon 2 of the heme B porphyrin ring is defined according to the Fischer nomenclature.</text>
</comment>
<comment type="similarity">
    <text evidence="1">Belongs to the UbiA prenyltransferase family. Protoheme IX farnesyltransferase subfamily.</text>
</comment>
<accession>A5VP40</accession>
<dbReference type="EC" id="2.5.1.141" evidence="1"/>
<dbReference type="EMBL" id="CP000708">
    <property type="protein sequence ID" value="ABQ60100.1"/>
    <property type="molecule type" value="Genomic_DNA"/>
</dbReference>
<dbReference type="SMR" id="A5VP40"/>
<dbReference type="KEGG" id="bov:BOV_0475"/>
<dbReference type="HOGENOM" id="CLU_029631_0_2_5"/>
<dbReference type="UniPathway" id="UPA00834">
    <property type="reaction ID" value="UER00712"/>
</dbReference>
<dbReference type="Proteomes" id="UP000006383">
    <property type="component" value="Chromosome I"/>
</dbReference>
<dbReference type="GO" id="GO:0005886">
    <property type="term" value="C:plasma membrane"/>
    <property type="evidence" value="ECO:0007669"/>
    <property type="project" value="UniProtKB-SubCell"/>
</dbReference>
<dbReference type="GO" id="GO:0008495">
    <property type="term" value="F:protoheme IX farnesyltransferase activity"/>
    <property type="evidence" value="ECO:0007669"/>
    <property type="project" value="UniProtKB-UniRule"/>
</dbReference>
<dbReference type="GO" id="GO:0048034">
    <property type="term" value="P:heme O biosynthetic process"/>
    <property type="evidence" value="ECO:0007669"/>
    <property type="project" value="UniProtKB-UniRule"/>
</dbReference>
<dbReference type="CDD" id="cd13957">
    <property type="entry name" value="PT_UbiA_Cox10"/>
    <property type="match status" value="1"/>
</dbReference>
<dbReference type="FunFam" id="1.10.357.140:FF:000001">
    <property type="entry name" value="Protoheme IX farnesyltransferase"/>
    <property type="match status" value="1"/>
</dbReference>
<dbReference type="Gene3D" id="1.10.357.140">
    <property type="entry name" value="UbiA prenyltransferase"/>
    <property type="match status" value="1"/>
</dbReference>
<dbReference type="HAMAP" id="MF_00154">
    <property type="entry name" value="CyoE_CtaB"/>
    <property type="match status" value="1"/>
</dbReference>
<dbReference type="InterPro" id="IPR006369">
    <property type="entry name" value="Protohaem_IX_farnesylTrfase"/>
</dbReference>
<dbReference type="InterPro" id="IPR000537">
    <property type="entry name" value="UbiA_prenyltransferase"/>
</dbReference>
<dbReference type="InterPro" id="IPR030470">
    <property type="entry name" value="UbiA_prenylTrfase_CS"/>
</dbReference>
<dbReference type="InterPro" id="IPR044878">
    <property type="entry name" value="UbiA_sf"/>
</dbReference>
<dbReference type="NCBIfam" id="TIGR01473">
    <property type="entry name" value="cyoE_ctaB"/>
    <property type="match status" value="1"/>
</dbReference>
<dbReference type="NCBIfam" id="NF003349">
    <property type="entry name" value="PRK04375.1-2"/>
    <property type="match status" value="1"/>
</dbReference>
<dbReference type="PANTHER" id="PTHR43448:SF7">
    <property type="entry name" value="4-HYDROXYBENZOATE SOLANESYLTRANSFERASE"/>
    <property type="match status" value="1"/>
</dbReference>
<dbReference type="PANTHER" id="PTHR43448">
    <property type="entry name" value="PROTOHEME IX FARNESYLTRANSFERASE, MITOCHONDRIAL"/>
    <property type="match status" value="1"/>
</dbReference>
<dbReference type="Pfam" id="PF01040">
    <property type="entry name" value="UbiA"/>
    <property type="match status" value="1"/>
</dbReference>
<dbReference type="PROSITE" id="PS00943">
    <property type="entry name" value="UBIA"/>
    <property type="match status" value="1"/>
</dbReference>
<reference key="1">
    <citation type="journal article" date="2009" name="PLoS ONE">
        <title>Genome degradation in Brucella ovis corresponds with narrowing of its host range and tissue tropism.</title>
        <authorList>
            <person name="Tsolis R.M."/>
            <person name="Seshadri R."/>
            <person name="Santos R.L."/>
            <person name="Sangari F.J."/>
            <person name="Lobo J.M."/>
            <person name="de Jong M.F."/>
            <person name="Ren Q."/>
            <person name="Myers G."/>
            <person name="Brinkac L.M."/>
            <person name="Nelson W.C."/>
            <person name="Deboy R.T."/>
            <person name="Angiuoli S."/>
            <person name="Khouri H."/>
            <person name="Dimitrov G."/>
            <person name="Robinson J.R."/>
            <person name="Mulligan S."/>
            <person name="Walker R.L."/>
            <person name="Elzer P.E."/>
            <person name="Hassan K.A."/>
            <person name="Paulsen I.T."/>
        </authorList>
    </citation>
    <scope>NUCLEOTIDE SEQUENCE [LARGE SCALE GENOMIC DNA]</scope>
    <source>
        <strain>ATCC 25840 / 63/290 / NCTC 10512</strain>
    </source>
</reference>
<gene>
    <name evidence="1" type="primary">ctaB</name>
    <name type="ordered locus">BOV_0475</name>
</gene>
<proteinExistence type="inferred from homology"/>